<keyword id="KW-0967">Endosome</keyword>
<keyword id="KW-0325">Glycoprotein</keyword>
<keyword id="KW-0472">Membrane</keyword>
<keyword id="KW-0653">Protein transport</keyword>
<keyword id="KW-1185">Reference proteome</keyword>
<keyword id="KW-0735">Signal-anchor</keyword>
<keyword id="KW-0812">Transmembrane</keyword>
<keyword id="KW-1133">Transmembrane helix</keyword>
<keyword id="KW-0813">Transport</keyword>
<keyword id="KW-0926">Vacuole</keyword>
<evidence type="ECO:0000250" key="1"/>
<evidence type="ECO:0000255" key="2"/>
<evidence type="ECO:0000255" key="3">
    <source>
        <dbReference type="PROSITE-ProRule" id="PRU00548"/>
    </source>
</evidence>
<evidence type="ECO:0000256" key="4">
    <source>
        <dbReference type="SAM" id="MobiDB-lite"/>
    </source>
</evidence>
<evidence type="ECO:0000305" key="5"/>
<gene>
    <name type="primary">SSH4</name>
    <name type="ordered locus">DEHA2D06226g</name>
</gene>
<organism>
    <name type="scientific">Debaryomyces hansenii (strain ATCC 36239 / CBS 767 / BCRC 21394 / JCM 1990 / NBRC 0083 / IGC 2968)</name>
    <name type="common">Yeast</name>
    <name type="synonym">Torulaspora hansenii</name>
    <dbReference type="NCBI Taxonomy" id="284592"/>
    <lineage>
        <taxon>Eukaryota</taxon>
        <taxon>Fungi</taxon>
        <taxon>Dikarya</taxon>
        <taxon>Ascomycota</taxon>
        <taxon>Saccharomycotina</taxon>
        <taxon>Pichiomycetes</taxon>
        <taxon>Debaryomycetaceae</taxon>
        <taxon>Debaryomyces</taxon>
    </lineage>
</organism>
<feature type="chain" id="PRO_0000324481" description="Protein SSH4">
    <location>
        <begin position="1"/>
        <end position="529"/>
    </location>
</feature>
<feature type="topological domain" description="Cytoplasmic" evidence="2">
    <location>
        <begin position="1"/>
        <end position="2"/>
    </location>
</feature>
<feature type="transmembrane region" description="Helical; Signal-anchor for type II membrane protein" evidence="2">
    <location>
        <begin position="3"/>
        <end position="23"/>
    </location>
</feature>
<feature type="topological domain" description="Lumenal" evidence="2">
    <location>
        <begin position="24"/>
        <end position="529"/>
    </location>
</feature>
<feature type="domain" description="B30.2/SPRY" evidence="3">
    <location>
        <begin position="101"/>
        <end position="309"/>
    </location>
</feature>
<feature type="region of interest" description="Disordered" evidence="4">
    <location>
        <begin position="383"/>
        <end position="427"/>
    </location>
</feature>
<feature type="region of interest" description="Disordered" evidence="4">
    <location>
        <begin position="440"/>
        <end position="529"/>
    </location>
</feature>
<feature type="compositionally biased region" description="Polar residues" evidence="4">
    <location>
        <begin position="383"/>
        <end position="398"/>
    </location>
</feature>
<feature type="compositionally biased region" description="Polar residues" evidence="4">
    <location>
        <begin position="457"/>
        <end position="476"/>
    </location>
</feature>
<feature type="compositionally biased region" description="Basic and acidic residues" evidence="4">
    <location>
        <begin position="477"/>
        <end position="487"/>
    </location>
</feature>
<feature type="compositionally biased region" description="Polar residues" evidence="4">
    <location>
        <begin position="492"/>
        <end position="504"/>
    </location>
</feature>
<feature type="compositionally biased region" description="Basic residues" evidence="4">
    <location>
        <begin position="511"/>
        <end position="529"/>
    </location>
</feature>
<feature type="glycosylation site" description="N-linked (GlcNAc...) asparagine" evidence="2">
    <location>
        <position position="157"/>
    </location>
</feature>
<feature type="glycosylation site" description="N-linked (GlcNAc...) asparagine" evidence="2">
    <location>
        <position position="182"/>
    </location>
</feature>
<feature type="glycosylation site" description="N-linked (GlcNAc...) asparagine" evidence="2">
    <location>
        <position position="211"/>
    </location>
</feature>
<feature type="glycosylation site" description="N-linked (GlcNAc...) asparagine" evidence="2">
    <location>
        <position position="344"/>
    </location>
</feature>
<feature type="glycosylation site" description="N-linked (GlcNAc...) asparagine" evidence="2">
    <location>
        <position position="390"/>
    </location>
</feature>
<feature type="glycosylation site" description="N-linked (GlcNAc...) asparagine" evidence="2">
    <location>
        <position position="439"/>
    </location>
</feature>
<feature type="glycosylation site" description="N-linked (GlcNAc...) asparagine" evidence="2">
    <location>
        <position position="458"/>
    </location>
</feature>
<feature type="glycosylation site" description="N-linked (GlcNAc...) asparagine" evidence="2">
    <location>
        <position position="492"/>
    </location>
</feature>
<feature type="glycosylation site" description="N-linked (GlcNAc...) asparagine" evidence="2">
    <location>
        <position position="503"/>
    </location>
</feature>
<feature type="glycosylation site" description="N-linked (GlcNAc...) asparagine" evidence="2">
    <location>
        <position position="506"/>
    </location>
</feature>
<protein>
    <recommendedName>
        <fullName>Protein SSH4</fullName>
    </recommendedName>
</protein>
<sequence>MDPAIILFVFIFVSVCFCLLIFLSAYRVFSGGSERNEYSFLGSEILGSEVPREFLNDEEALNHLASEYDFTHLSPEEQFSYLRGEEFTKTNPPNFHNTRGKSYSNEDDMLLKERGINAFEFEQDADILRGRYIVADKTEINFHNNDTPYSTATSILNYSLPVKNRAYSDTVYFEVKVFEFQNGSENPNGHFAIGLVTKPYPSDFRLPGYNNFSIAYESTGNLKINKPFPTPLQQHQGDNSQYNALVLPPLQQSDIVGFGYVVSTGTLFITRNGKKVMDVMRGCFIDLYPAVGCFSSNAKFQVNLGQLGFVWIEANVRKYGFVSNSDYKKIKGEQGLAALPEYGNSSVAEGDKLLEMGEELPPRYPEDELDFFGRSSKDILKVGSSSKSQNKTKSFSNNEKQDLEEINGEPKVAEEHRSSLITDDPEEVMDLRERLYEQNITGPVSELSSERAPLIGNNESQSEFYVNAKSATSSREGNTETDLKQVTDEEPNSSQELTKAAQNDSNISKTSRTKKKKKNKKNSKKNKKK</sequence>
<accession>Q6BSU1</accession>
<dbReference type="EMBL" id="CR382136">
    <property type="protein sequence ID" value="CAG86873.2"/>
    <property type="molecule type" value="Genomic_DNA"/>
</dbReference>
<dbReference type="RefSeq" id="XP_458729.2">
    <property type="nucleotide sequence ID" value="XM_458729.1"/>
</dbReference>
<dbReference type="SMR" id="Q6BSU1"/>
<dbReference type="FunCoup" id="Q6BSU1">
    <property type="interactions" value="32"/>
</dbReference>
<dbReference type="STRING" id="284592.Q6BSU1"/>
<dbReference type="GlyCosmos" id="Q6BSU1">
    <property type="glycosylation" value="10 sites, No reported glycans"/>
</dbReference>
<dbReference type="GeneID" id="2901608"/>
<dbReference type="KEGG" id="dha:DEHA2D06226g"/>
<dbReference type="VEuPathDB" id="FungiDB:DEHA2D06226g"/>
<dbReference type="eggNOG" id="KOG1477">
    <property type="taxonomic scope" value="Eukaryota"/>
</dbReference>
<dbReference type="HOGENOM" id="CLU_015116_0_0_1"/>
<dbReference type="InParanoid" id="Q6BSU1"/>
<dbReference type="OMA" id="HNNDTPY"/>
<dbReference type="OrthoDB" id="258495at2759"/>
<dbReference type="Proteomes" id="UP000000599">
    <property type="component" value="Chromosome D"/>
</dbReference>
<dbReference type="GO" id="GO:0010008">
    <property type="term" value="C:endosome membrane"/>
    <property type="evidence" value="ECO:0007669"/>
    <property type="project" value="UniProtKB-SubCell"/>
</dbReference>
<dbReference type="GO" id="GO:0005774">
    <property type="term" value="C:vacuolar membrane"/>
    <property type="evidence" value="ECO:0007669"/>
    <property type="project" value="UniProtKB-SubCell"/>
</dbReference>
<dbReference type="GO" id="GO:0015031">
    <property type="term" value="P:protein transport"/>
    <property type="evidence" value="ECO:0007669"/>
    <property type="project" value="UniProtKB-KW"/>
</dbReference>
<dbReference type="CDD" id="cd12910">
    <property type="entry name" value="SPRY_SSH4_like"/>
    <property type="match status" value="1"/>
</dbReference>
<dbReference type="Gene3D" id="2.60.120.920">
    <property type="match status" value="1"/>
</dbReference>
<dbReference type="InterPro" id="IPR001870">
    <property type="entry name" value="B30.2/SPRY"/>
</dbReference>
<dbReference type="InterPro" id="IPR043136">
    <property type="entry name" value="B30.2/SPRY_sf"/>
</dbReference>
<dbReference type="InterPro" id="IPR013320">
    <property type="entry name" value="ConA-like_dom_sf"/>
</dbReference>
<dbReference type="InterPro" id="IPR003877">
    <property type="entry name" value="SPRY_dom"/>
</dbReference>
<dbReference type="InterPro" id="IPR035780">
    <property type="entry name" value="SPRY_Ssh4-like"/>
</dbReference>
<dbReference type="Pfam" id="PF00622">
    <property type="entry name" value="SPRY"/>
    <property type="match status" value="1"/>
</dbReference>
<dbReference type="SMART" id="SM00449">
    <property type="entry name" value="SPRY"/>
    <property type="match status" value="1"/>
</dbReference>
<dbReference type="SUPFAM" id="SSF49899">
    <property type="entry name" value="Concanavalin A-like lectins/glucanases"/>
    <property type="match status" value="1"/>
</dbReference>
<dbReference type="PROSITE" id="PS50188">
    <property type="entry name" value="B302_SPRY"/>
    <property type="match status" value="1"/>
</dbReference>
<proteinExistence type="inferred from homology"/>
<name>SSH4_DEBHA</name>
<comment type="function">
    <text evidence="1">Components of the endosome-vacuole trafficking pathway that regulates nutrient transport. May be involved in processes which determine whether plasma membrane proteins are degraded or routed to the plasma membrane (By similarity).</text>
</comment>
<comment type="subcellular location">
    <subcellularLocation>
        <location evidence="1">Vacuole membrane</location>
        <topology evidence="1">Single-pass type II membrane protein</topology>
    </subcellularLocation>
    <subcellularLocation>
        <location evidence="1">Endosome membrane</location>
        <topology evidence="1">Single-pass type II membrane protein</topology>
    </subcellularLocation>
</comment>
<comment type="similarity">
    <text evidence="5">Belongs to the SSH4 family.</text>
</comment>
<reference key="1">
    <citation type="journal article" date="2004" name="Nature">
        <title>Genome evolution in yeasts.</title>
        <authorList>
            <person name="Dujon B."/>
            <person name="Sherman D."/>
            <person name="Fischer G."/>
            <person name="Durrens P."/>
            <person name="Casaregola S."/>
            <person name="Lafontaine I."/>
            <person name="de Montigny J."/>
            <person name="Marck C."/>
            <person name="Neuveglise C."/>
            <person name="Talla E."/>
            <person name="Goffard N."/>
            <person name="Frangeul L."/>
            <person name="Aigle M."/>
            <person name="Anthouard V."/>
            <person name="Babour A."/>
            <person name="Barbe V."/>
            <person name="Barnay S."/>
            <person name="Blanchin S."/>
            <person name="Beckerich J.-M."/>
            <person name="Beyne E."/>
            <person name="Bleykasten C."/>
            <person name="Boisrame A."/>
            <person name="Boyer J."/>
            <person name="Cattolico L."/>
            <person name="Confanioleri F."/>
            <person name="de Daruvar A."/>
            <person name="Despons L."/>
            <person name="Fabre E."/>
            <person name="Fairhead C."/>
            <person name="Ferry-Dumazet H."/>
            <person name="Groppi A."/>
            <person name="Hantraye F."/>
            <person name="Hennequin C."/>
            <person name="Jauniaux N."/>
            <person name="Joyet P."/>
            <person name="Kachouri R."/>
            <person name="Kerrest A."/>
            <person name="Koszul R."/>
            <person name="Lemaire M."/>
            <person name="Lesur I."/>
            <person name="Ma L."/>
            <person name="Muller H."/>
            <person name="Nicaud J.-M."/>
            <person name="Nikolski M."/>
            <person name="Oztas S."/>
            <person name="Ozier-Kalogeropoulos O."/>
            <person name="Pellenz S."/>
            <person name="Potier S."/>
            <person name="Richard G.-F."/>
            <person name="Straub M.-L."/>
            <person name="Suleau A."/>
            <person name="Swennen D."/>
            <person name="Tekaia F."/>
            <person name="Wesolowski-Louvel M."/>
            <person name="Westhof E."/>
            <person name="Wirth B."/>
            <person name="Zeniou-Meyer M."/>
            <person name="Zivanovic Y."/>
            <person name="Bolotin-Fukuhara M."/>
            <person name="Thierry A."/>
            <person name="Bouchier C."/>
            <person name="Caudron B."/>
            <person name="Scarpelli C."/>
            <person name="Gaillardin C."/>
            <person name="Weissenbach J."/>
            <person name="Wincker P."/>
            <person name="Souciet J.-L."/>
        </authorList>
    </citation>
    <scope>NUCLEOTIDE SEQUENCE [LARGE SCALE GENOMIC DNA]</scope>
    <source>
        <strain>ATCC 36239 / CBS 767 / BCRC 21394 / JCM 1990 / NBRC 0083 / IGC 2968</strain>
    </source>
</reference>